<keyword id="KW-0030">Aminoacyl-tRNA synthetase</keyword>
<keyword id="KW-0067">ATP-binding</keyword>
<keyword id="KW-0963">Cytoplasm</keyword>
<keyword id="KW-0436">Ligase</keyword>
<keyword id="KW-0460">Magnesium</keyword>
<keyword id="KW-0479">Metal-binding</keyword>
<keyword id="KW-0547">Nucleotide-binding</keyword>
<keyword id="KW-0648">Protein biosynthesis</keyword>
<evidence type="ECO:0000255" key="1">
    <source>
        <dbReference type="HAMAP-Rule" id="MF_00284"/>
    </source>
</evidence>
<reference key="1">
    <citation type="journal article" date="2011" name="J. Bacteriol.">
        <title>Whole-genome sequences of thirteen isolates of Borrelia burgdorferi.</title>
        <authorList>
            <person name="Schutzer S.E."/>
            <person name="Fraser-Liggett C.M."/>
            <person name="Casjens S.R."/>
            <person name="Qiu W.G."/>
            <person name="Dunn J.J."/>
            <person name="Mongodin E.F."/>
            <person name="Luft B.J."/>
        </authorList>
    </citation>
    <scope>NUCLEOTIDE SEQUENCE [LARGE SCALE GENOMIC DNA]</scope>
    <source>
        <strain>ZS7</strain>
    </source>
</reference>
<comment type="catalytic activity">
    <reaction evidence="1">
        <text>tRNA(Phe) + L-phenylalanine + ATP = L-phenylalanyl-tRNA(Phe) + AMP + diphosphate + H(+)</text>
        <dbReference type="Rhea" id="RHEA:19413"/>
        <dbReference type="Rhea" id="RHEA-COMP:9668"/>
        <dbReference type="Rhea" id="RHEA-COMP:9699"/>
        <dbReference type="ChEBI" id="CHEBI:15378"/>
        <dbReference type="ChEBI" id="CHEBI:30616"/>
        <dbReference type="ChEBI" id="CHEBI:33019"/>
        <dbReference type="ChEBI" id="CHEBI:58095"/>
        <dbReference type="ChEBI" id="CHEBI:78442"/>
        <dbReference type="ChEBI" id="CHEBI:78531"/>
        <dbReference type="ChEBI" id="CHEBI:456215"/>
        <dbReference type="EC" id="6.1.1.20"/>
    </reaction>
</comment>
<comment type="cofactor">
    <cofactor evidence="1">
        <name>Mg(2+)</name>
        <dbReference type="ChEBI" id="CHEBI:18420"/>
    </cofactor>
</comment>
<comment type="subunit">
    <text evidence="1">Tetramer of two alpha and two beta subunits.</text>
</comment>
<comment type="subcellular location">
    <subcellularLocation>
        <location evidence="1">Cytoplasm</location>
    </subcellularLocation>
</comment>
<comment type="similarity">
    <text evidence="1">Belongs to the phenylalanyl-tRNA synthetase beta subunit family. Type 2 subfamily.</text>
</comment>
<sequence>MPKLEIYKNLFLDKIGKNFTNLEISELLEPFKAEFDGFDESSGKIKIEFNDTNRPDLWSYLGLARQIKTYFFGEMPYYDFFSKKGDFKKFYGEILVDGKMSQIRPFIFGFLAKGLIINDKMLETLIQFQEKLCQNYGQKRRRIAMGMYNSNFIKFPISYIASSPNHKFVPLGMDYELSLLEINEKHPKGLEYSHIIKNFDKFPLLLDDNNNVVSYPPIINSNNIGSLKVGDTDLFVEVTGIDFEATLLALSIAACDFYDMGFEILPVKTVFREPFNLDFKELVCPYYFQEEVEFNVENINRLLGSNLTLERICLSLKKMGVNSYSKDFKNYIVPPFYRNDFLHEVDVIEDVMIGEGLSSFNPELPKAFAVGRLSPLEEFSRNVRNLMVGMGFQEMIYNYMGSKKDFIDRMNINDQNFLKVSNPMTENYEYIRASIIPNLLKSESVSSNFPYPHKIFEIGKVALRNLDTTEGTSTFTNLAFLMSGKEISFNEINSIVATLFYYLNIEINLIESKTTFYINGRGADIVIEGFNIGGFGEISPYVLNNFGIFIPCSVFEVNINKLMSRS</sequence>
<gene>
    <name evidence="1" type="primary">pheT</name>
    <name type="ordered locus">BbuZS7_0524</name>
</gene>
<organism>
    <name type="scientific">Borreliella burgdorferi (strain ZS7)</name>
    <name type="common">Borrelia burgdorferi</name>
    <dbReference type="NCBI Taxonomy" id="445985"/>
    <lineage>
        <taxon>Bacteria</taxon>
        <taxon>Pseudomonadati</taxon>
        <taxon>Spirochaetota</taxon>
        <taxon>Spirochaetia</taxon>
        <taxon>Spirochaetales</taxon>
        <taxon>Borreliaceae</taxon>
        <taxon>Borreliella</taxon>
    </lineage>
</organism>
<protein>
    <recommendedName>
        <fullName evidence="1">Phenylalanine--tRNA ligase beta subunit</fullName>
        <ecNumber evidence="1">6.1.1.20</ecNumber>
    </recommendedName>
    <alternativeName>
        <fullName evidence="1">Phenylalanyl-tRNA synthetase beta subunit</fullName>
        <shortName evidence="1">PheRS</shortName>
    </alternativeName>
</protein>
<proteinExistence type="inferred from homology"/>
<feature type="chain" id="PRO_1000119403" description="Phenylalanine--tRNA ligase beta subunit">
    <location>
        <begin position="1"/>
        <end position="566"/>
    </location>
</feature>
<feature type="domain" description="B5" evidence="1">
    <location>
        <begin position="287"/>
        <end position="362"/>
    </location>
</feature>
<feature type="binding site" evidence="1">
    <location>
        <position position="340"/>
    </location>
    <ligand>
        <name>Mg(2+)</name>
        <dbReference type="ChEBI" id="CHEBI:18420"/>
        <note>shared with alpha subunit</note>
    </ligand>
</feature>
<feature type="binding site" evidence="1">
    <location>
        <position position="346"/>
    </location>
    <ligand>
        <name>Mg(2+)</name>
        <dbReference type="ChEBI" id="CHEBI:18420"/>
        <note>shared with alpha subunit</note>
    </ligand>
</feature>
<feature type="binding site" evidence="1">
    <location>
        <position position="349"/>
    </location>
    <ligand>
        <name>Mg(2+)</name>
        <dbReference type="ChEBI" id="CHEBI:18420"/>
        <note>shared with alpha subunit</note>
    </ligand>
</feature>
<feature type="binding site" evidence="1">
    <location>
        <position position="350"/>
    </location>
    <ligand>
        <name>Mg(2+)</name>
        <dbReference type="ChEBI" id="CHEBI:18420"/>
        <note>shared with alpha subunit</note>
    </ligand>
</feature>
<name>SYFB_BORBZ</name>
<dbReference type="EC" id="6.1.1.20" evidence="1"/>
<dbReference type="EMBL" id="CP001205">
    <property type="protein sequence ID" value="ACK75091.1"/>
    <property type="molecule type" value="Genomic_DNA"/>
</dbReference>
<dbReference type="RefSeq" id="WP_012597403.1">
    <property type="nucleotide sequence ID" value="NC_011728.1"/>
</dbReference>
<dbReference type="SMR" id="B7J278"/>
<dbReference type="KEGG" id="bbz:BbuZS7_0524"/>
<dbReference type="HOGENOM" id="CLU_020279_3_0_12"/>
<dbReference type="Proteomes" id="UP000006901">
    <property type="component" value="Chromosome"/>
</dbReference>
<dbReference type="GO" id="GO:0009328">
    <property type="term" value="C:phenylalanine-tRNA ligase complex"/>
    <property type="evidence" value="ECO:0007669"/>
    <property type="project" value="TreeGrafter"/>
</dbReference>
<dbReference type="GO" id="GO:0005524">
    <property type="term" value="F:ATP binding"/>
    <property type="evidence" value="ECO:0007669"/>
    <property type="project" value="UniProtKB-UniRule"/>
</dbReference>
<dbReference type="GO" id="GO:0000287">
    <property type="term" value="F:magnesium ion binding"/>
    <property type="evidence" value="ECO:0007669"/>
    <property type="project" value="InterPro"/>
</dbReference>
<dbReference type="GO" id="GO:0004826">
    <property type="term" value="F:phenylalanine-tRNA ligase activity"/>
    <property type="evidence" value="ECO:0007669"/>
    <property type="project" value="UniProtKB-UniRule"/>
</dbReference>
<dbReference type="GO" id="GO:0003723">
    <property type="term" value="F:RNA binding"/>
    <property type="evidence" value="ECO:0007669"/>
    <property type="project" value="InterPro"/>
</dbReference>
<dbReference type="GO" id="GO:0006432">
    <property type="term" value="P:phenylalanyl-tRNA aminoacylation"/>
    <property type="evidence" value="ECO:0007669"/>
    <property type="project" value="UniProtKB-UniRule"/>
</dbReference>
<dbReference type="Gene3D" id="3.30.56.10">
    <property type="match status" value="2"/>
</dbReference>
<dbReference type="Gene3D" id="3.30.930.10">
    <property type="entry name" value="Bira Bifunctional Protein, Domain 2"/>
    <property type="match status" value="1"/>
</dbReference>
<dbReference type="Gene3D" id="3.50.40.10">
    <property type="entry name" value="Phenylalanyl-trna Synthetase, Chain B, domain 3"/>
    <property type="match status" value="1"/>
</dbReference>
<dbReference type="HAMAP" id="MF_00284">
    <property type="entry name" value="Phe_tRNA_synth_beta2"/>
    <property type="match status" value="1"/>
</dbReference>
<dbReference type="InterPro" id="IPR045864">
    <property type="entry name" value="aa-tRNA-synth_II/BPL/LPL"/>
</dbReference>
<dbReference type="InterPro" id="IPR005146">
    <property type="entry name" value="B3/B4_tRNA-bd"/>
</dbReference>
<dbReference type="InterPro" id="IPR009061">
    <property type="entry name" value="DNA-bd_dom_put_sf"/>
</dbReference>
<dbReference type="InterPro" id="IPR045060">
    <property type="entry name" value="Phe-tRNA-ligase_IIc_bsu"/>
</dbReference>
<dbReference type="InterPro" id="IPR004531">
    <property type="entry name" value="Phe-tRNA-synth_IIc_bsu_arc_euk"/>
</dbReference>
<dbReference type="InterPro" id="IPR020825">
    <property type="entry name" value="Phe-tRNA_synthase-like_B3/B4"/>
</dbReference>
<dbReference type="InterPro" id="IPR022918">
    <property type="entry name" value="Phe_tRNA_ligase_beta2_arc"/>
</dbReference>
<dbReference type="InterPro" id="IPR041616">
    <property type="entry name" value="PheRS_beta_core"/>
</dbReference>
<dbReference type="InterPro" id="IPR005147">
    <property type="entry name" value="tRNA_synthase_B5-dom"/>
</dbReference>
<dbReference type="NCBIfam" id="TIGR00471">
    <property type="entry name" value="pheT_arch"/>
    <property type="match status" value="1"/>
</dbReference>
<dbReference type="PANTHER" id="PTHR10947:SF0">
    <property type="entry name" value="PHENYLALANINE--TRNA LIGASE BETA SUBUNIT"/>
    <property type="match status" value="1"/>
</dbReference>
<dbReference type="PANTHER" id="PTHR10947">
    <property type="entry name" value="PHENYLALANYL-TRNA SYNTHETASE BETA CHAIN AND LEUCINE-RICH REPEAT-CONTAINING PROTEIN 47"/>
    <property type="match status" value="1"/>
</dbReference>
<dbReference type="Pfam" id="PF03484">
    <property type="entry name" value="B5"/>
    <property type="match status" value="1"/>
</dbReference>
<dbReference type="Pfam" id="PF17759">
    <property type="entry name" value="tRNA_synthFbeta"/>
    <property type="match status" value="1"/>
</dbReference>
<dbReference type="SMART" id="SM00873">
    <property type="entry name" value="B3_4"/>
    <property type="match status" value="1"/>
</dbReference>
<dbReference type="SMART" id="SM00874">
    <property type="entry name" value="B5"/>
    <property type="match status" value="1"/>
</dbReference>
<dbReference type="SUPFAM" id="SSF55681">
    <property type="entry name" value="Class II aaRS and biotin synthetases"/>
    <property type="match status" value="1"/>
</dbReference>
<dbReference type="SUPFAM" id="SSF46955">
    <property type="entry name" value="Putative DNA-binding domain"/>
    <property type="match status" value="1"/>
</dbReference>
<dbReference type="PROSITE" id="PS51483">
    <property type="entry name" value="B5"/>
    <property type="match status" value="1"/>
</dbReference>
<accession>B7J278</accession>